<keyword id="KW-0687">Ribonucleoprotein</keyword>
<keyword id="KW-0689">Ribosomal protein</keyword>
<organism>
    <name type="scientific">Burkholderia lata (strain ATCC 17760 / DSM 23089 / LMG 22485 / NCIMB 9086 / R18194 / 383)</name>
    <dbReference type="NCBI Taxonomy" id="482957"/>
    <lineage>
        <taxon>Bacteria</taxon>
        <taxon>Pseudomonadati</taxon>
        <taxon>Pseudomonadota</taxon>
        <taxon>Betaproteobacteria</taxon>
        <taxon>Burkholderiales</taxon>
        <taxon>Burkholderiaceae</taxon>
        <taxon>Burkholderia</taxon>
        <taxon>Burkholderia cepacia complex</taxon>
    </lineage>
</organism>
<gene>
    <name evidence="1" type="primary">rpsI</name>
    <name type="ordered locus">Bcep18194_A3766</name>
</gene>
<name>RS9_BURL3</name>
<dbReference type="EMBL" id="CP000151">
    <property type="protein sequence ID" value="ABB07367.1"/>
    <property type="molecule type" value="Genomic_DNA"/>
</dbReference>
<dbReference type="RefSeq" id="WP_006476904.1">
    <property type="nucleotide sequence ID" value="NZ_WNDV01000019.1"/>
</dbReference>
<dbReference type="SMR" id="Q39JJ9"/>
<dbReference type="GeneID" id="93139380"/>
<dbReference type="KEGG" id="bur:Bcep18194_A3766"/>
<dbReference type="PATRIC" id="fig|482957.22.peg.626"/>
<dbReference type="HOGENOM" id="CLU_046483_2_1_4"/>
<dbReference type="Proteomes" id="UP000002705">
    <property type="component" value="Chromosome 1"/>
</dbReference>
<dbReference type="GO" id="GO:0022627">
    <property type="term" value="C:cytosolic small ribosomal subunit"/>
    <property type="evidence" value="ECO:0007669"/>
    <property type="project" value="TreeGrafter"/>
</dbReference>
<dbReference type="GO" id="GO:0003723">
    <property type="term" value="F:RNA binding"/>
    <property type="evidence" value="ECO:0007669"/>
    <property type="project" value="TreeGrafter"/>
</dbReference>
<dbReference type="GO" id="GO:0003735">
    <property type="term" value="F:structural constituent of ribosome"/>
    <property type="evidence" value="ECO:0007669"/>
    <property type="project" value="InterPro"/>
</dbReference>
<dbReference type="GO" id="GO:0006412">
    <property type="term" value="P:translation"/>
    <property type="evidence" value="ECO:0007669"/>
    <property type="project" value="UniProtKB-UniRule"/>
</dbReference>
<dbReference type="FunFam" id="3.30.230.10:FF:000001">
    <property type="entry name" value="30S ribosomal protein S9"/>
    <property type="match status" value="1"/>
</dbReference>
<dbReference type="Gene3D" id="3.30.230.10">
    <property type="match status" value="1"/>
</dbReference>
<dbReference type="HAMAP" id="MF_00532_B">
    <property type="entry name" value="Ribosomal_uS9_B"/>
    <property type="match status" value="1"/>
</dbReference>
<dbReference type="InterPro" id="IPR020568">
    <property type="entry name" value="Ribosomal_Su5_D2-typ_SF"/>
</dbReference>
<dbReference type="InterPro" id="IPR000754">
    <property type="entry name" value="Ribosomal_uS9"/>
</dbReference>
<dbReference type="InterPro" id="IPR023035">
    <property type="entry name" value="Ribosomal_uS9_bac/plastid"/>
</dbReference>
<dbReference type="InterPro" id="IPR020574">
    <property type="entry name" value="Ribosomal_uS9_CS"/>
</dbReference>
<dbReference type="InterPro" id="IPR014721">
    <property type="entry name" value="Ribsml_uS5_D2-typ_fold_subgr"/>
</dbReference>
<dbReference type="NCBIfam" id="NF001099">
    <property type="entry name" value="PRK00132.1"/>
    <property type="match status" value="1"/>
</dbReference>
<dbReference type="PANTHER" id="PTHR21569">
    <property type="entry name" value="RIBOSOMAL PROTEIN S9"/>
    <property type="match status" value="1"/>
</dbReference>
<dbReference type="PANTHER" id="PTHR21569:SF1">
    <property type="entry name" value="SMALL RIBOSOMAL SUBUNIT PROTEIN US9M"/>
    <property type="match status" value="1"/>
</dbReference>
<dbReference type="Pfam" id="PF00380">
    <property type="entry name" value="Ribosomal_S9"/>
    <property type="match status" value="1"/>
</dbReference>
<dbReference type="SUPFAM" id="SSF54211">
    <property type="entry name" value="Ribosomal protein S5 domain 2-like"/>
    <property type="match status" value="1"/>
</dbReference>
<dbReference type="PROSITE" id="PS00360">
    <property type="entry name" value="RIBOSOMAL_S9"/>
    <property type="match status" value="1"/>
</dbReference>
<protein>
    <recommendedName>
        <fullName evidence="1">Small ribosomal subunit protein uS9</fullName>
    </recommendedName>
    <alternativeName>
        <fullName evidence="2">30S ribosomal protein S9</fullName>
    </alternativeName>
</protein>
<accession>Q39JJ9</accession>
<evidence type="ECO:0000255" key="1">
    <source>
        <dbReference type="HAMAP-Rule" id="MF_00532"/>
    </source>
</evidence>
<evidence type="ECO:0000305" key="2"/>
<comment type="similarity">
    <text evidence="1">Belongs to the universal ribosomal protein uS9 family.</text>
</comment>
<reference key="1">
    <citation type="submission" date="2005-10" db="EMBL/GenBank/DDBJ databases">
        <title>Complete sequence of chromosome 1 of Burkholderia sp. 383.</title>
        <authorList>
            <consortium name="US DOE Joint Genome Institute"/>
            <person name="Copeland A."/>
            <person name="Lucas S."/>
            <person name="Lapidus A."/>
            <person name="Barry K."/>
            <person name="Detter J.C."/>
            <person name="Glavina T."/>
            <person name="Hammon N."/>
            <person name="Israni S."/>
            <person name="Pitluck S."/>
            <person name="Chain P."/>
            <person name="Malfatti S."/>
            <person name="Shin M."/>
            <person name="Vergez L."/>
            <person name="Schmutz J."/>
            <person name="Larimer F."/>
            <person name="Land M."/>
            <person name="Kyrpides N."/>
            <person name="Lykidis A."/>
            <person name="Richardson P."/>
        </authorList>
    </citation>
    <scope>NUCLEOTIDE SEQUENCE [LARGE SCALE GENOMIC DNA]</scope>
    <source>
        <strain>ATCC 17760 / DSM 23089 / LMG 22485 / NCIMB 9086 / R18194 / 383</strain>
    </source>
</reference>
<sequence length="130" mass="14316">MIGNWNYGTGRRKSAVARVFIKAGKGDIIVNGKPIADYFSRETSLMIVRQPLELTNHGQTFDIKVNVNGGGETGQAGAVRHGITRALIDYDATLKPSLSSAGFVTRDAREVERKKVGLRKARRAKQFSKR</sequence>
<feature type="chain" id="PRO_1000051191" description="Small ribosomal subunit protein uS9">
    <location>
        <begin position="1"/>
        <end position="130"/>
    </location>
</feature>
<proteinExistence type="inferred from homology"/>